<comment type="function">
    <text evidence="1">Usually encoded in the trnK tRNA gene intron. Probably assists in splicing its own and other chloroplast group II introns.</text>
</comment>
<comment type="subcellular location">
    <subcellularLocation>
        <location>Plastid</location>
        <location>Chloroplast</location>
    </subcellularLocation>
</comment>
<comment type="similarity">
    <text evidence="1">Belongs to the intron maturase 2 family. MatK subfamily.</text>
</comment>
<proteinExistence type="inferred from homology"/>
<evidence type="ECO:0000255" key="1">
    <source>
        <dbReference type="HAMAP-Rule" id="MF_01390"/>
    </source>
</evidence>
<name>MATK_THLAR</name>
<accession>Q9GF35</accession>
<sequence>MXXXXGYLEFDGARQQSFLYPLFFREYIYVLAYDHRLNRLNRNRSIFVENVDSDKKYSSLIVKRLILRMYEQNCLIFSIKDLNQNTSLGHTNLFYYQMISVLFAVIVEIPFSLRLGSSFEGKQLKKSYNLQSIHSIFPFLEDKLTHFNYVLDVLIPYPIHLEILVQTLRYRVKDASSLHFFRFCLYESCNWKNFDIKKTSILNPRFFLFLYNSHVCEYESIFFVLRKRSSHLRSTSYKVLFERILFYVKIQHFFKVFVNNFPAILGLLKDPFLHYVRYHGKCILATKDTPLLMNKWKYYFVNLWQCYFSVWFQPQKVNINQLSKDNFEFMGYLSSLRLNPLVVRSQMLENSFLIDNVRIKLYSKIPISSIIGSLAKDKFCNVLGHPISKATWADSSDSDILNRFVRICRNISHYYSGSSKKKNLYRIKYILRLCCVKTLARKHKSTVRAFLKRLGSGLLEEFLTGEDQVLSLIFPRSYYASKRLYRVRIWYLDILSLNDLVNHE</sequence>
<protein>
    <recommendedName>
        <fullName evidence="1">Maturase K</fullName>
    </recommendedName>
    <alternativeName>
        <fullName evidence="1">Intron maturase</fullName>
    </alternativeName>
</protein>
<keyword id="KW-0150">Chloroplast</keyword>
<keyword id="KW-0507">mRNA processing</keyword>
<keyword id="KW-0934">Plastid</keyword>
<keyword id="KW-0694">RNA-binding</keyword>
<keyword id="KW-0819">tRNA processing</keyword>
<organism>
    <name type="scientific">Thlaspi arvense</name>
    <name type="common">Field penny-cress</name>
    <dbReference type="NCBI Taxonomy" id="13288"/>
    <lineage>
        <taxon>Eukaryota</taxon>
        <taxon>Viridiplantae</taxon>
        <taxon>Streptophyta</taxon>
        <taxon>Embryophyta</taxon>
        <taxon>Tracheophyta</taxon>
        <taxon>Spermatophyta</taxon>
        <taxon>Magnoliopsida</taxon>
        <taxon>eudicotyledons</taxon>
        <taxon>Gunneridae</taxon>
        <taxon>Pentapetalae</taxon>
        <taxon>rosids</taxon>
        <taxon>malvids</taxon>
        <taxon>Brassicales</taxon>
        <taxon>Brassicaceae</taxon>
        <taxon>Thlaspideae</taxon>
        <taxon>Thlaspi</taxon>
    </lineage>
</organism>
<geneLocation type="chloroplast"/>
<reference key="1">
    <citation type="submission" date="1999-04" db="EMBL/GenBank/DDBJ databases">
        <title>Evolutionary analysis of plastidic maturase K and nuclear chalcone synthase and their utility for phylogenetic reconstructions within the Brassicaceae.</title>
        <authorList>
            <person name="Koch M."/>
            <person name="Mitchell-Olds T."/>
        </authorList>
    </citation>
    <scope>NUCLEOTIDE SEQUENCE [GENOMIC DNA]</scope>
</reference>
<feature type="chain" id="PRO_0000143733" description="Maturase K">
    <location>
        <begin position="1"/>
        <end position="504"/>
    </location>
</feature>
<gene>
    <name evidence="1" type="primary">matK</name>
</gene>
<dbReference type="EMBL" id="AF144360">
    <property type="protein sequence ID" value="AAG43329.1"/>
    <property type="molecule type" value="Genomic_DNA"/>
</dbReference>
<dbReference type="GO" id="GO:0009507">
    <property type="term" value="C:chloroplast"/>
    <property type="evidence" value="ECO:0007669"/>
    <property type="project" value="UniProtKB-SubCell"/>
</dbReference>
<dbReference type="GO" id="GO:0003723">
    <property type="term" value="F:RNA binding"/>
    <property type="evidence" value="ECO:0007669"/>
    <property type="project" value="UniProtKB-KW"/>
</dbReference>
<dbReference type="GO" id="GO:0006397">
    <property type="term" value="P:mRNA processing"/>
    <property type="evidence" value="ECO:0007669"/>
    <property type="project" value="UniProtKB-KW"/>
</dbReference>
<dbReference type="GO" id="GO:0008380">
    <property type="term" value="P:RNA splicing"/>
    <property type="evidence" value="ECO:0007669"/>
    <property type="project" value="UniProtKB-UniRule"/>
</dbReference>
<dbReference type="GO" id="GO:0008033">
    <property type="term" value="P:tRNA processing"/>
    <property type="evidence" value="ECO:0007669"/>
    <property type="project" value="UniProtKB-KW"/>
</dbReference>
<dbReference type="HAMAP" id="MF_01390">
    <property type="entry name" value="MatK"/>
    <property type="match status" value="1"/>
</dbReference>
<dbReference type="InterPro" id="IPR024937">
    <property type="entry name" value="Domain_X"/>
</dbReference>
<dbReference type="InterPro" id="IPR002866">
    <property type="entry name" value="Maturase_MatK"/>
</dbReference>
<dbReference type="InterPro" id="IPR024942">
    <property type="entry name" value="Maturase_MatK_N"/>
</dbReference>
<dbReference type="PANTHER" id="PTHR34811">
    <property type="entry name" value="MATURASE K"/>
    <property type="match status" value="1"/>
</dbReference>
<dbReference type="PANTHER" id="PTHR34811:SF1">
    <property type="entry name" value="MATURASE K"/>
    <property type="match status" value="1"/>
</dbReference>
<dbReference type="Pfam" id="PF01348">
    <property type="entry name" value="Intron_maturas2"/>
    <property type="match status" value="1"/>
</dbReference>
<dbReference type="Pfam" id="PF01824">
    <property type="entry name" value="MatK_N"/>
    <property type="match status" value="1"/>
</dbReference>